<reference key="1">
    <citation type="submission" date="2007-11" db="EMBL/GenBank/DDBJ databases">
        <title>Complete genome sequence of Clostridium phytofermentans ISDg.</title>
        <authorList>
            <person name="Leschine S.B."/>
            <person name="Warnick T.A."/>
            <person name="Blanchard J.L."/>
            <person name="Schnell D.J."/>
            <person name="Petit E.L."/>
            <person name="LaTouf W.G."/>
            <person name="Copeland A."/>
            <person name="Lucas S."/>
            <person name="Lapidus A."/>
            <person name="Barry K."/>
            <person name="Glavina del Rio T."/>
            <person name="Dalin E."/>
            <person name="Tice H."/>
            <person name="Pitluck S."/>
            <person name="Kiss H."/>
            <person name="Brettin T."/>
            <person name="Bruce D."/>
            <person name="Detter J.C."/>
            <person name="Han C."/>
            <person name="Kuske C."/>
            <person name="Schmutz J."/>
            <person name="Larimer F."/>
            <person name="Land M."/>
            <person name="Hauser L."/>
            <person name="Kyrpides N."/>
            <person name="Kim E.A."/>
            <person name="Richardson P."/>
        </authorList>
    </citation>
    <scope>NUCLEOTIDE SEQUENCE [LARGE SCALE GENOMIC DNA]</scope>
    <source>
        <strain>ATCC 700394 / DSM 18823 / ISDg</strain>
    </source>
</reference>
<feature type="chain" id="PRO_1000080144" description="Small ribosomal subunit protein bS16">
    <location>
        <begin position="1"/>
        <end position="81"/>
    </location>
</feature>
<evidence type="ECO:0000255" key="1">
    <source>
        <dbReference type="HAMAP-Rule" id="MF_00385"/>
    </source>
</evidence>
<evidence type="ECO:0000305" key="2"/>
<name>RS16_LACP7</name>
<comment type="similarity">
    <text evidence="1">Belongs to the bacterial ribosomal protein bS16 family.</text>
</comment>
<gene>
    <name evidence="1" type="primary">rpsP</name>
    <name type="ordered locus">Cphy_2408</name>
</gene>
<dbReference type="EMBL" id="CP000885">
    <property type="protein sequence ID" value="ABX42769.1"/>
    <property type="molecule type" value="Genomic_DNA"/>
</dbReference>
<dbReference type="RefSeq" id="WP_012200423.1">
    <property type="nucleotide sequence ID" value="NC_010001.1"/>
</dbReference>
<dbReference type="SMR" id="A9KLM5"/>
<dbReference type="STRING" id="357809.Cphy_2408"/>
<dbReference type="KEGG" id="cpy:Cphy_2408"/>
<dbReference type="eggNOG" id="COG0228">
    <property type="taxonomic scope" value="Bacteria"/>
</dbReference>
<dbReference type="HOGENOM" id="CLU_100590_5_0_9"/>
<dbReference type="OrthoDB" id="9807878at2"/>
<dbReference type="Proteomes" id="UP000000370">
    <property type="component" value="Chromosome"/>
</dbReference>
<dbReference type="GO" id="GO:0005737">
    <property type="term" value="C:cytoplasm"/>
    <property type="evidence" value="ECO:0007669"/>
    <property type="project" value="UniProtKB-ARBA"/>
</dbReference>
<dbReference type="GO" id="GO:0015935">
    <property type="term" value="C:small ribosomal subunit"/>
    <property type="evidence" value="ECO:0007669"/>
    <property type="project" value="TreeGrafter"/>
</dbReference>
<dbReference type="GO" id="GO:0003735">
    <property type="term" value="F:structural constituent of ribosome"/>
    <property type="evidence" value="ECO:0007669"/>
    <property type="project" value="InterPro"/>
</dbReference>
<dbReference type="GO" id="GO:0006412">
    <property type="term" value="P:translation"/>
    <property type="evidence" value="ECO:0007669"/>
    <property type="project" value="UniProtKB-UniRule"/>
</dbReference>
<dbReference type="Gene3D" id="3.30.1320.10">
    <property type="match status" value="1"/>
</dbReference>
<dbReference type="HAMAP" id="MF_00385">
    <property type="entry name" value="Ribosomal_bS16"/>
    <property type="match status" value="1"/>
</dbReference>
<dbReference type="InterPro" id="IPR000307">
    <property type="entry name" value="Ribosomal_bS16"/>
</dbReference>
<dbReference type="InterPro" id="IPR023803">
    <property type="entry name" value="Ribosomal_bS16_dom_sf"/>
</dbReference>
<dbReference type="NCBIfam" id="TIGR00002">
    <property type="entry name" value="S16"/>
    <property type="match status" value="1"/>
</dbReference>
<dbReference type="PANTHER" id="PTHR12919">
    <property type="entry name" value="30S RIBOSOMAL PROTEIN S16"/>
    <property type="match status" value="1"/>
</dbReference>
<dbReference type="PANTHER" id="PTHR12919:SF20">
    <property type="entry name" value="SMALL RIBOSOMAL SUBUNIT PROTEIN BS16M"/>
    <property type="match status" value="1"/>
</dbReference>
<dbReference type="Pfam" id="PF00886">
    <property type="entry name" value="Ribosomal_S16"/>
    <property type="match status" value="1"/>
</dbReference>
<dbReference type="SUPFAM" id="SSF54565">
    <property type="entry name" value="Ribosomal protein S16"/>
    <property type="match status" value="1"/>
</dbReference>
<keyword id="KW-1185">Reference proteome</keyword>
<keyword id="KW-0687">Ribonucleoprotein</keyword>
<keyword id="KW-0689">Ribosomal protein</keyword>
<organism>
    <name type="scientific">Lachnoclostridium phytofermentans (strain ATCC 700394 / DSM 18823 / ISDg)</name>
    <name type="common">Clostridium phytofermentans</name>
    <dbReference type="NCBI Taxonomy" id="357809"/>
    <lineage>
        <taxon>Bacteria</taxon>
        <taxon>Bacillati</taxon>
        <taxon>Bacillota</taxon>
        <taxon>Clostridia</taxon>
        <taxon>Lachnospirales</taxon>
        <taxon>Lachnospiraceae</taxon>
    </lineage>
</organism>
<accession>A9KLM5</accession>
<proteinExistence type="inferred from homology"/>
<sequence>MAVKIRLKRMGQKKAPFYRVIVADSRSPRDGKFIAEIGTYDPTQEPSAFNVDEEAAKKWLADGAQPTETINRLFKKAGIVK</sequence>
<protein>
    <recommendedName>
        <fullName evidence="1">Small ribosomal subunit protein bS16</fullName>
    </recommendedName>
    <alternativeName>
        <fullName evidence="2">30S ribosomal protein S16</fullName>
    </alternativeName>
</protein>